<reference key="1">
    <citation type="submission" date="2008-02" db="EMBL/GenBank/DDBJ databases">
        <title>Complete sequence of Haemophilus somnus 2336.</title>
        <authorList>
            <consortium name="US DOE Joint Genome Institute"/>
            <person name="Siddaramappa S."/>
            <person name="Duncan A.J."/>
            <person name="Challacombe J.F."/>
            <person name="Rainey D."/>
            <person name="Gillaspy A.F."/>
            <person name="Carson M."/>
            <person name="Gipson J."/>
            <person name="Gipson M."/>
            <person name="Bruce D."/>
            <person name="Detter J.C."/>
            <person name="Han C.S."/>
            <person name="Land M."/>
            <person name="Tapia R."/>
            <person name="Thompson L.S."/>
            <person name="Orvis J."/>
            <person name="Zaitshik J."/>
            <person name="Barnes G."/>
            <person name="Brettin T.S."/>
            <person name="Dyer D.W."/>
            <person name="Inzana T.J."/>
        </authorList>
    </citation>
    <scope>NUCLEOTIDE SEQUENCE [LARGE SCALE GENOMIC DNA]</scope>
    <source>
        <strain>2336</strain>
    </source>
</reference>
<dbReference type="EC" id="2.5.1.75" evidence="1"/>
<dbReference type="EMBL" id="CP000947">
    <property type="protein sequence ID" value="ACA31328.1"/>
    <property type="molecule type" value="Genomic_DNA"/>
</dbReference>
<dbReference type="RefSeq" id="WP_012340709.1">
    <property type="nucleotide sequence ID" value="NC_010519.1"/>
</dbReference>
<dbReference type="SMR" id="B0UUU6"/>
<dbReference type="STRING" id="228400.HSM_1569"/>
<dbReference type="GeneID" id="31487873"/>
<dbReference type="KEGG" id="hsm:HSM_1569"/>
<dbReference type="HOGENOM" id="CLU_032616_0_0_6"/>
<dbReference type="GO" id="GO:0005524">
    <property type="term" value="F:ATP binding"/>
    <property type="evidence" value="ECO:0007669"/>
    <property type="project" value="UniProtKB-UniRule"/>
</dbReference>
<dbReference type="GO" id="GO:0052381">
    <property type="term" value="F:tRNA dimethylallyltransferase activity"/>
    <property type="evidence" value="ECO:0007669"/>
    <property type="project" value="UniProtKB-UniRule"/>
</dbReference>
<dbReference type="GO" id="GO:0006400">
    <property type="term" value="P:tRNA modification"/>
    <property type="evidence" value="ECO:0007669"/>
    <property type="project" value="TreeGrafter"/>
</dbReference>
<dbReference type="FunFam" id="1.10.20.140:FF:000001">
    <property type="entry name" value="tRNA dimethylallyltransferase"/>
    <property type="match status" value="1"/>
</dbReference>
<dbReference type="Gene3D" id="1.10.20.140">
    <property type="match status" value="1"/>
</dbReference>
<dbReference type="Gene3D" id="3.40.50.300">
    <property type="entry name" value="P-loop containing nucleotide triphosphate hydrolases"/>
    <property type="match status" value="1"/>
</dbReference>
<dbReference type="HAMAP" id="MF_00185">
    <property type="entry name" value="IPP_trans"/>
    <property type="match status" value="1"/>
</dbReference>
<dbReference type="InterPro" id="IPR039657">
    <property type="entry name" value="Dimethylallyltransferase"/>
</dbReference>
<dbReference type="InterPro" id="IPR018022">
    <property type="entry name" value="IPT"/>
</dbReference>
<dbReference type="InterPro" id="IPR027417">
    <property type="entry name" value="P-loop_NTPase"/>
</dbReference>
<dbReference type="NCBIfam" id="TIGR00174">
    <property type="entry name" value="miaA"/>
    <property type="match status" value="1"/>
</dbReference>
<dbReference type="PANTHER" id="PTHR11088">
    <property type="entry name" value="TRNA DIMETHYLALLYLTRANSFERASE"/>
    <property type="match status" value="1"/>
</dbReference>
<dbReference type="PANTHER" id="PTHR11088:SF60">
    <property type="entry name" value="TRNA DIMETHYLALLYLTRANSFERASE"/>
    <property type="match status" value="1"/>
</dbReference>
<dbReference type="Pfam" id="PF01715">
    <property type="entry name" value="IPPT"/>
    <property type="match status" value="1"/>
</dbReference>
<dbReference type="SUPFAM" id="SSF52540">
    <property type="entry name" value="P-loop containing nucleoside triphosphate hydrolases"/>
    <property type="match status" value="1"/>
</dbReference>
<evidence type="ECO:0000255" key="1">
    <source>
        <dbReference type="HAMAP-Rule" id="MF_00185"/>
    </source>
</evidence>
<sequence length="311" mass="35642">MNKKSTAIFLMGPTASGKTDLAIQLHQELPVEVISVDSALIYKGMDIGTAKPNAQELALTPHRLIDIKDPSENYSAAEFRRDALREMQKITQQGKIPLLVGGTMLYYKALLEGLSPLPSADEKVRLEIEQKAEKFGWATLHNELAKIDPISAQRINPNDSQRINRALEVFYLTGQSLTELTAQKGEEIPYHIIHFAIAPERAVLHQRIEQRFHKMIEQGFQQEVEKLYQRSDLHPNLPSIRCVGYRQMWEYLQGNYGKDEMIFRGICATRQLAKRQLTWLRGWKSPIEWLDSLNPKSAKEKIIKTIKHNCK</sequence>
<proteinExistence type="inferred from homology"/>
<gene>
    <name evidence="1" type="primary">miaA</name>
    <name type="ordered locus">HSM_1569</name>
</gene>
<feature type="chain" id="PRO_1000077398" description="tRNA dimethylallyltransferase">
    <location>
        <begin position="1"/>
        <end position="311"/>
    </location>
</feature>
<feature type="region of interest" description="Interaction with substrate tRNA" evidence="1">
    <location>
        <begin position="37"/>
        <end position="40"/>
    </location>
</feature>
<feature type="region of interest" description="Interaction with substrate tRNA" evidence="1">
    <location>
        <begin position="161"/>
        <end position="165"/>
    </location>
</feature>
<feature type="region of interest" description="Interaction with substrate tRNA" evidence="1">
    <location>
        <begin position="241"/>
        <end position="246"/>
    </location>
</feature>
<feature type="binding site" evidence="1">
    <location>
        <begin position="12"/>
        <end position="19"/>
    </location>
    <ligand>
        <name>ATP</name>
        <dbReference type="ChEBI" id="CHEBI:30616"/>
    </ligand>
</feature>
<feature type="binding site" evidence="1">
    <location>
        <begin position="14"/>
        <end position="19"/>
    </location>
    <ligand>
        <name>substrate</name>
    </ligand>
</feature>
<feature type="site" description="Interaction with substrate tRNA" evidence="1">
    <location>
        <position position="103"/>
    </location>
</feature>
<feature type="site" description="Interaction with substrate tRNA" evidence="1">
    <location>
        <position position="125"/>
    </location>
</feature>
<protein>
    <recommendedName>
        <fullName evidence="1">tRNA dimethylallyltransferase</fullName>
        <ecNumber evidence="1">2.5.1.75</ecNumber>
    </recommendedName>
    <alternativeName>
        <fullName evidence="1">Dimethylallyl diphosphate:tRNA dimethylallyltransferase</fullName>
        <shortName evidence="1">DMAPP:tRNA dimethylallyltransferase</shortName>
        <shortName evidence="1">DMATase</shortName>
    </alternativeName>
    <alternativeName>
        <fullName evidence="1">Isopentenyl-diphosphate:tRNA isopentenyltransferase</fullName>
        <shortName evidence="1">IPP transferase</shortName>
        <shortName evidence="1">IPPT</shortName>
        <shortName evidence="1">IPTase</shortName>
    </alternativeName>
</protein>
<comment type="function">
    <text evidence="1">Catalyzes the transfer of a dimethylallyl group onto the adenine at position 37 in tRNAs that read codons beginning with uridine, leading to the formation of N6-(dimethylallyl)adenosine (i(6)A).</text>
</comment>
<comment type="catalytic activity">
    <reaction evidence="1">
        <text>adenosine(37) in tRNA + dimethylallyl diphosphate = N(6)-dimethylallyladenosine(37) in tRNA + diphosphate</text>
        <dbReference type="Rhea" id="RHEA:26482"/>
        <dbReference type="Rhea" id="RHEA-COMP:10162"/>
        <dbReference type="Rhea" id="RHEA-COMP:10375"/>
        <dbReference type="ChEBI" id="CHEBI:33019"/>
        <dbReference type="ChEBI" id="CHEBI:57623"/>
        <dbReference type="ChEBI" id="CHEBI:74411"/>
        <dbReference type="ChEBI" id="CHEBI:74415"/>
        <dbReference type="EC" id="2.5.1.75"/>
    </reaction>
</comment>
<comment type="cofactor">
    <cofactor evidence="1">
        <name>Mg(2+)</name>
        <dbReference type="ChEBI" id="CHEBI:18420"/>
    </cofactor>
</comment>
<comment type="subunit">
    <text evidence="1">Monomer.</text>
</comment>
<comment type="similarity">
    <text evidence="1">Belongs to the IPP transferase family.</text>
</comment>
<keyword id="KW-0067">ATP-binding</keyword>
<keyword id="KW-0460">Magnesium</keyword>
<keyword id="KW-0547">Nucleotide-binding</keyword>
<keyword id="KW-0808">Transferase</keyword>
<keyword id="KW-0819">tRNA processing</keyword>
<name>MIAA_HISS2</name>
<accession>B0UUU6</accession>
<organism>
    <name type="scientific">Histophilus somni (strain 2336)</name>
    <name type="common">Haemophilus somnus</name>
    <dbReference type="NCBI Taxonomy" id="228400"/>
    <lineage>
        <taxon>Bacteria</taxon>
        <taxon>Pseudomonadati</taxon>
        <taxon>Pseudomonadota</taxon>
        <taxon>Gammaproteobacteria</taxon>
        <taxon>Pasteurellales</taxon>
        <taxon>Pasteurellaceae</taxon>
        <taxon>Histophilus</taxon>
    </lineage>
</organism>